<comment type="function">
    <text evidence="1">One of the primary rRNA binding proteins, it binds directly to 16S rRNA where it nucleates assembly of the head domain of the 30S subunit. Is located at the subunit interface close to the decoding center, probably blocks exit of the E-site tRNA.</text>
</comment>
<comment type="subunit">
    <text evidence="1">Part of the 30S ribosomal subunit. Contacts proteins S9 and S11.</text>
</comment>
<comment type="similarity">
    <text evidence="1">Belongs to the universal ribosomal protein uS7 family.</text>
</comment>
<organism>
    <name type="scientific">Streptococcus pneumoniae (strain Hungary19A-6)</name>
    <dbReference type="NCBI Taxonomy" id="487214"/>
    <lineage>
        <taxon>Bacteria</taxon>
        <taxon>Bacillati</taxon>
        <taxon>Bacillota</taxon>
        <taxon>Bacilli</taxon>
        <taxon>Lactobacillales</taxon>
        <taxon>Streptococcaceae</taxon>
        <taxon>Streptococcus</taxon>
    </lineage>
</organism>
<protein>
    <recommendedName>
        <fullName evidence="1">Small ribosomal subunit protein uS7</fullName>
    </recommendedName>
    <alternativeName>
        <fullName evidence="2">30S ribosomal protein S7</fullName>
    </alternativeName>
</protein>
<reference key="1">
    <citation type="journal article" date="2010" name="Genome Biol.">
        <title>Structure and dynamics of the pan-genome of Streptococcus pneumoniae and closely related species.</title>
        <authorList>
            <person name="Donati C."/>
            <person name="Hiller N.L."/>
            <person name="Tettelin H."/>
            <person name="Muzzi A."/>
            <person name="Croucher N.J."/>
            <person name="Angiuoli S.V."/>
            <person name="Oggioni M."/>
            <person name="Dunning Hotopp J.C."/>
            <person name="Hu F.Z."/>
            <person name="Riley D.R."/>
            <person name="Covacci A."/>
            <person name="Mitchell T.J."/>
            <person name="Bentley S.D."/>
            <person name="Kilian M."/>
            <person name="Ehrlich G.D."/>
            <person name="Rappuoli R."/>
            <person name="Moxon E.R."/>
            <person name="Masignani V."/>
        </authorList>
    </citation>
    <scope>NUCLEOTIDE SEQUENCE [LARGE SCALE GENOMIC DNA]</scope>
    <source>
        <strain>Hungary19A-6</strain>
    </source>
</reference>
<proteinExistence type="inferred from homology"/>
<sequence>MSRKNRAPKRDVLPDPLYNSQLVTRLINRVMLDGKRGTAASIVYGAFEQIKEATGNDALEVFETAMENIMPVLEVRARRVGGSNYQVPVEVRPERRTTLGLRWLVTIARLRGEHTMQDRLAKEILDAANNTGAAVKKREDTHRMAEANRAFAHFRW</sequence>
<dbReference type="EMBL" id="CP000936">
    <property type="protein sequence ID" value="ACA37356.1"/>
    <property type="molecule type" value="Genomic_DNA"/>
</dbReference>
<dbReference type="RefSeq" id="WP_000087873.1">
    <property type="nucleotide sequence ID" value="NC_010380.1"/>
</dbReference>
<dbReference type="SMR" id="B1I8Z8"/>
<dbReference type="GeneID" id="93738576"/>
<dbReference type="KEGG" id="spv:SPH_0388"/>
<dbReference type="HOGENOM" id="CLU_072226_1_1_9"/>
<dbReference type="Proteomes" id="UP000002163">
    <property type="component" value="Chromosome"/>
</dbReference>
<dbReference type="GO" id="GO:0015935">
    <property type="term" value="C:small ribosomal subunit"/>
    <property type="evidence" value="ECO:0007669"/>
    <property type="project" value="InterPro"/>
</dbReference>
<dbReference type="GO" id="GO:0019843">
    <property type="term" value="F:rRNA binding"/>
    <property type="evidence" value="ECO:0007669"/>
    <property type="project" value="UniProtKB-UniRule"/>
</dbReference>
<dbReference type="GO" id="GO:0003735">
    <property type="term" value="F:structural constituent of ribosome"/>
    <property type="evidence" value="ECO:0007669"/>
    <property type="project" value="InterPro"/>
</dbReference>
<dbReference type="GO" id="GO:0000049">
    <property type="term" value="F:tRNA binding"/>
    <property type="evidence" value="ECO:0007669"/>
    <property type="project" value="UniProtKB-UniRule"/>
</dbReference>
<dbReference type="GO" id="GO:0006412">
    <property type="term" value="P:translation"/>
    <property type="evidence" value="ECO:0007669"/>
    <property type="project" value="UniProtKB-UniRule"/>
</dbReference>
<dbReference type="CDD" id="cd14869">
    <property type="entry name" value="uS7_Bacteria"/>
    <property type="match status" value="1"/>
</dbReference>
<dbReference type="FunFam" id="1.10.455.10:FF:000001">
    <property type="entry name" value="30S ribosomal protein S7"/>
    <property type="match status" value="1"/>
</dbReference>
<dbReference type="Gene3D" id="1.10.455.10">
    <property type="entry name" value="Ribosomal protein S7 domain"/>
    <property type="match status" value="1"/>
</dbReference>
<dbReference type="HAMAP" id="MF_00480_B">
    <property type="entry name" value="Ribosomal_uS7_B"/>
    <property type="match status" value="1"/>
</dbReference>
<dbReference type="InterPro" id="IPR000235">
    <property type="entry name" value="Ribosomal_uS7"/>
</dbReference>
<dbReference type="InterPro" id="IPR005717">
    <property type="entry name" value="Ribosomal_uS7_bac/org-type"/>
</dbReference>
<dbReference type="InterPro" id="IPR020606">
    <property type="entry name" value="Ribosomal_uS7_CS"/>
</dbReference>
<dbReference type="InterPro" id="IPR023798">
    <property type="entry name" value="Ribosomal_uS7_dom"/>
</dbReference>
<dbReference type="InterPro" id="IPR036823">
    <property type="entry name" value="Ribosomal_uS7_dom_sf"/>
</dbReference>
<dbReference type="NCBIfam" id="TIGR01029">
    <property type="entry name" value="rpsG_bact"/>
    <property type="match status" value="1"/>
</dbReference>
<dbReference type="PANTHER" id="PTHR11205">
    <property type="entry name" value="RIBOSOMAL PROTEIN S7"/>
    <property type="match status" value="1"/>
</dbReference>
<dbReference type="Pfam" id="PF00177">
    <property type="entry name" value="Ribosomal_S7"/>
    <property type="match status" value="1"/>
</dbReference>
<dbReference type="PIRSF" id="PIRSF002122">
    <property type="entry name" value="RPS7p_RPS7a_RPS5e_RPS7o"/>
    <property type="match status" value="1"/>
</dbReference>
<dbReference type="SUPFAM" id="SSF47973">
    <property type="entry name" value="Ribosomal protein S7"/>
    <property type="match status" value="1"/>
</dbReference>
<dbReference type="PROSITE" id="PS00052">
    <property type="entry name" value="RIBOSOMAL_S7"/>
    <property type="match status" value="1"/>
</dbReference>
<feature type="chain" id="PRO_1000126009" description="Small ribosomal subunit protein uS7">
    <location>
        <begin position="1"/>
        <end position="156"/>
    </location>
</feature>
<keyword id="KW-0687">Ribonucleoprotein</keyword>
<keyword id="KW-0689">Ribosomal protein</keyword>
<keyword id="KW-0694">RNA-binding</keyword>
<keyword id="KW-0699">rRNA-binding</keyword>
<keyword id="KW-0820">tRNA-binding</keyword>
<name>RS7_STRPI</name>
<evidence type="ECO:0000255" key="1">
    <source>
        <dbReference type="HAMAP-Rule" id="MF_00480"/>
    </source>
</evidence>
<evidence type="ECO:0000305" key="2"/>
<accession>B1I8Z8</accession>
<gene>
    <name evidence="1" type="primary">rpsG</name>
    <name type="ordered locus">SPH_0388</name>
</gene>